<protein>
    <recommendedName>
        <fullName evidence="1">Cytidylate kinase</fullName>
        <shortName evidence="1">CK</shortName>
        <ecNumber evidence="1">2.7.4.25</ecNumber>
    </recommendedName>
    <alternativeName>
        <fullName evidence="1">Cytidine monophosphate kinase</fullName>
        <shortName evidence="1">CMP kinase</shortName>
    </alternativeName>
</protein>
<sequence>MEFVQIAIDGPAGAGKSTIAKRIAERLNITYIDTGAMYRALTYKVLANNIDITNEKTIIELAQNSNIQFLQENIYLDGKMINEEIRSIEINKKVSHVAKIKEVREILVDAQRKIALGQDVIMDGRDIGTHVLPNATLKIFLTASVQERALRRYLELKKKGIEVDIDELEKDIMNRDNIDSQRAFAPLVKAQDAIIIDTTGLTIEDVVERIINLLKGV</sequence>
<comment type="catalytic activity">
    <reaction evidence="1">
        <text>CMP + ATP = CDP + ADP</text>
        <dbReference type="Rhea" id="RHEA:11600"/>
        <dbReference type="ChEBI" id="CHEBI:30616"/>
        <dbReference type="ChEBI" id="CHEBI:58069"/>
        <dbReference type="ChEBI" id="CHEBI:60377"/>
        <dbReference type="ChEBI" id="CHEBI:456216"/>
        <dbReference type="EC" id="2.7.4.25"/>
    </reaction>
</comment>
<comment type="catalytic activity">
    <reaction evidence="1">
        <text>dCMP + ATP = dCDP + ADP</text>
        <dbReference type="Rhea" id="RHEA:25094"/>
        <dbReference type="ChEBI" id="CHEBI:30616"/>
        <dbReference type="ChEBI" id="CHEBI:57566"/>
        <dbReference type="ChEBI" id="CHEBI:58593"/>
        <dbReference type="ChEBI" id="CHEBI:456216"/>
        <dbReference type="EC" id="2.7.4.25"/>
    </reaction>
</comment>
<comment type="subcellular location">
    <subcellularLocation>
        <location evidence="1">Cytoplasm</location>
    </subcellularLocation>
</comment>
<comment type="similarity">
    <text evidence="1">Belongs to the cytidylate kinase family. Type 1 subfamily.</text>
</comment>
<keyword id="KW-0067">ATP-binding</keyword>
<keyword id="KW-0963">Cytoplasm</keyword>
<keyword id="KW-0418">Kinase</keyword>
<keyword id="KW-0547">Nucleotide-binding</keyword>
<keyword id="KW-1185">Reference proteome</keyword>
<keyword id="KW-0808">Transferase</keyword>
<evidence type="ECO:0000255" key="1">
    <source>
        <dbReference type="HAMAP-Rule" id="MF_00238"/>
    </source>
</evidence>
<reference key="1">
    <citation type="submission" date="2007-10" db="EMBL/GenBank/DDBJ databases">
        <title>Complete genome of Alkaliphilus oremlandii OhILAs.</title>
        <authorList>
            <person name="Copeland A."/>
            <person name="Lucas S."/>
            <person name="Lapidus A."/>
            <person name="Barry K."/>
            <person name="Detter J.C."/>
            <person name="Glavina del Rio T."/>
            <person name="Hammon N."/>
            <person name="Israni S."/>
            <person name="Dalin E."/>
            <person name="Tice H."/>
            <person name="Pitluck S."/>
            <person name="Chain P."/>
            <person name="Malfatti S."/>
            <person name="Shin M."/>
            <person name="Vergez L."/>
            <person name="Schmutz J."/>
            <person name="Larimer F."/>
            <person name="Land M."/>
            <person name="Hauser L."/>
            <person name="Kyrpides N."/>
            <person name="Mikhailova N."/>
            <person name="Stolz J.F."/>
            <person name="Dawson A."/>
            <person name="Fisher E."/>
            <person name="Crable B."/>
            <person name="Perera E."/>
            <person name="Lisak J."/>
            <person name="Ranganathan M."/>
            <person name="Basu P."/>
            <person name="Richardson P."/>
        </authorList>
    </citation>
    <scope>NUCLEOTIDE SEQUENCE [LARGE SCALE GENOMIC DNA]</scope>
    <source>
        <strain>OhILAs</strain>
    </source>
</reference>
<gene>
    <name evidence="1" type="primary">cmk</name>
    <name type="ordered locus">Clos_1564</name>
</gene>
<organism>
    <name type="scientific">Alkaliphilus oremlandii (strain OhILAs)</name>
    <name type="common">Clostridium oremlandii (strain OhILAs)</name>
    <dbReference type="NCBI Taxonomy" id="350688"/>
    <lineage>
        <taxon>Bacteria</taxon>
        <taxon>Bacillati</taxon>
        <taxon>Bacillota</taxon>
        <taxon>Clostridia</taxon>
        <taxon>Peptostreptococcales</taxon>
        <taxon>Natronincolaceae</taxon>
        <taxon>Alkaliphilus</taxon>
    </lineage>
</organism>
<feature type="chain" id="PRO_1000119005" description="Cytidylate kinase">
    <location>
        <begin position="1"/>
        <end position="217"/>
    </location>
</feature>
<feature type="binding site" evidence="1">
    <location>
        <begin position="10"/>
        <end position="18"/>
    </location>
    <ligand>
        <name>ATP</name>
        <dbReference type="ChEBI" id="CHEBI:30616"/>
    </ligand>
</feature>
<name>KCY_ALKOO</name>
<proteinExistence type="inferred from homology"/>
<accession>A8MFE4</accession>
<dbReference type="EC" id="2.7.4.25" evidence="1"/>
<dbReference type="EMBL" id="CP000853">
    <property type="protein sequence ID" value="ABW19107.1"/>
    <property type="molecule type" value="Genomic_DNA"/>
</dbReference>
<dbReference type="RefSeq" id="WP_012159419.1">
    <property type="nucleotide sequence ID" value="NC_009922.1"/>
</dbReference>
<dbReference type="SMR" id="A8MFE4"/>
<dbReference type="STRING" id="350688.Clos_1564"/>
<dbReference type="KEGG" id="aoe:Clos_1564"/>
<dbReference type="eggNOG" id="COG0283">
    <property type="taxonomic scope" value="Bacteria"/>
</dbReference>
<dbReference type="HOGENOM" id="CLU_079959_0_2_9"/>
<dbReference type="OrthoDB" id="9807434at2"/>
<dbReference type="Proteomes" id="UP000000269">
    <property type="component" value="Chromosome"/>
</dbReference>
<dbReference type="GO" id="GO:0005829">
    <property type="term" value="C:cytosol"/>
    <property type="evidence" value="ECO:0007669"/>
    <property type="project" value="TreeGrafter"/>
</dbReference>
<dbReference type="GO" id="GO:0005524">
    <property type="term" value="F:ATP binding"/>
    <property type="evidence" value="ECO:0007669"/>
    <property type="project" value="UniProtKB-UniRule"/>
</dbReference>
<dbReference type="GO" id="GO:0036430">
    <property type="term" value="F:CMP kinase activity"/>
    <property type="evidence" value="ECO:0007669"/>
    <property type="project" value="RHEA"/>
</dbReference>
<dbReference type="GO" id="GO:0036431">
    <property type="term" value="F:dCMP kinase activity"/>
    <property type="evidence" value="ECO:0007669"/>
    <property type="project" value="RHEA"/>
</dbReference>
<dbReference type="GO" id="GO:0015949">
    <property type="term" value="P:nucleobase-containing small molecule interconversion"/>
    <property type="evidence" value="ECO:0007669"/>
    <property type="project" value="TreeGrafter"/>
</dbReference>
<dbReference type="GO" id="GO:0006220">
    <property type="term" value="P:pyrimidine nucleotide metabolic process"/>
    <property type="evidence" value="ECO:0007669"/>
    <property type="project" value="UniProtKB-UniRule"/>
</dbReference>
<dbReference type="CDD" id="cd02020">
    <property type="entry name" value="CMPK"/>
    <property type="match status" value="1"/>
</dbReference>
<dbReference type="Gene3D" id="3.40.50.300">
    <property type="entry name" value="P-loop containing nucleotide triphosphate hydrolases"/>
    <property type="match status" value="1"/>
</dbReference>
<dbReference type="HAMAP" id="MF_00238">
    <property type="entry name" value="Cytidyl_kinase_type1"/>
    <property type="match status" value="1"/>
</dbReference>
<dbReference type="InterPro" id="IPR003136">
    <property type="entry name" value="Cytidylate_kin"/>
</dbReference>
<dbReference type="InterPro" id="IPR011994">
    <property type="entry name" value="Cytidylate_kinase_dom"/>
</dbReference>
<dbReference type="InterPro" id="IPR027417">
    <property type="entry name" value="P-loop_NTPase"/>
</dbReference>
<dbReference type="NCBIfam" id="TIGR00017">
    <property type="entry name" value="cmk"/>
    <property type="match status" value="1"/>
</dbReference>
<dbReference type="PANTHER" id="PTHR21299:SF2">
    <property type="entry name" value="CYTIDYLATE KINASE"/>
    <property type="match status" value="1"/>
</dbReference>
<dbReference type="PANTHER" id="PTHR21299">
    <property type="entry name" value="CYTIDYLATE KINASE/PANTOATE-BETA-ALANINE LIGASE"/>
    <property type="match status" value="1"/>
</dbReference>
<dbReference type="Pfam" id="PF02224">
    <property type="entry name" value="Cytidylate_kin"/>
    <property type="match status" value="1"/>
</dbReference>
<dbReference type="SUPFAM" id="SSF52540">
    <property type="entry name" value="P-loop containing nucleoside triphosphate hydrolases"/>
    <property type="match status" value="1"/>
</dbReference>